<comment type="function">
    <text evidence="1">Catalyzes 2 different reactions between oxygen and the acireductone 1,2-dihydroxy-3-keto-5-methylthiopentene (DHK-MTPene) depending upon the metal bound in the active site. Fe-containing acireductone dioxygenase (Fe-ARD) produces formate and 2-keto-4-methylthiobutyrate (KMTB), the alpha-ketoacid precursor of methionine in the methionine recycle pathway. Ni-containing acireductone dioxygenase (Ni-ARD) produces methylthiopropionate, carbon monoxide and formate, and does not lie on the methionine recycle pathway.</text>
</comment>
<comment type="catalytic activity">
    <reaction evidence="1">
        <text>1,2-dihydroxy-5-(methylsulfanyl)pent-1-en-3-one + O2 = 3-(methylsulfanyl)propanoate + CO + formate + 2 H(+)</text>
        <dbReference type="Rhea" id="RHEA:14161"/>
        <dbReference type="ChEBI" id="CHEBI:15378"/>
        <dbReference type="ChEBI" id="CHEBI:15379"/>
        <dbReference type="ChEBI" id="CHEBI:15740"/>
        <dbReference type="ChEBI" id="CHEBI:17245"/>
        <dbReference type="ChEBI" id="CHEBI:49016"/>
        <dbReference type="ChEBI" id="CHEBI:49252"/>
        <dbReference type="EC" id="1.13.11.53"/>
    </reaction>
</comment>
<comment type="catalytic activity">
    <reaction evidence="1">
        <text>1,2-dihydroxy-5-(methylsulfanyl)pent-1-en-3-one + O2 = 4-methylsulfanyl-2-oxobutanoate + formate + 2 H(+)</text>
        <dbReference type="Rhea" id="RHEA:24504"/>
        <dbReference type="ChEBI" id="CHEBI:15378"/>
        <dbReference type="ChEBI" id="CHEBI:15379"/>
        <dbReference type="ChEBI" id="CHEBI:15740"/>
        <dbReference type="ChEBI" id="CHEBI:16723"/>
        <dbReference type="ChEBI" id="CHEBI:49252"/>
        <dbReference type="EC" id="1.13.11.54"/>
    </reaction>
</comment>
<comment type="cofactor">
    <cofactor evidence="1">
        <name>Fe(2+)</name>
        <dbReference type="ChEBI" id="CHEBI:29033"/>
    </cofactor>
    <text evidence="1">Binds 1 Fe(2+) cation per monomer.</text>
</comment>
<comment type="cofactor">
    <cofactor evidence="1">
        <name>Ni(2+)</name>
        <dbReference type="ChEBI" id="CHEBI:49786"/>
    </cofactor>
    <text evidence="1">Binds 1 nickel ion per monomer.</text>
</comment>
<comment type="pathway">
    <text evidence="1">Amino-acid biosynthesis; L-methionine biosynthesis via salvage pathway; L-methionine from S-methyl-5-thio-alpha-D-ribose 1-phosphate: step 5/6.</text>
</comment>
<comment type="subunit">
    <text evidence="1">Monomer.</text>
</comment>
<comment type="similarity">
    <text evidence="1">Belongs to the acireductone dioxygenase (ARD) family.</text>
</comment>
<gene>
    <name evidence="1" type="primary">mtnD</name>
    <name type="ordered locus">BCE_4106</name>
</gene>
<keyword id="KW-0028">Amino-acid biosynthesis</keyword>
<keyword id="KW-0223">Dioxygenase</keyword>
<keyword id="KW-0408">Iron</keyword>
<keyword id="KW-0479">Metal-binding</keyword>
<keyword id="KW-0486">Methionine biosynthesis</keyword>
<keyword id="KW-0533">Nickel</keyword>
<keyword id="KW-0560">Oxidoreductase</keyword>
<evidence type="ECO:0000255" key="1">
    <source>
        <dbReference type="HAMAP-Rule" id="MF_01682"/>
    </source>
</evidence>
<reference key="1">
    <citation type="journal article" date="2004" name="Nucleic Acids Res.">
        <title>The genome sequence of Bacillus cereus ATCC 10987 reveals metabolic adaptations and a large plasmid related to Bacillus anthracis pXO1.</title>
        <authorList>
            <person name="Rasko D.A."/>
            <person name="Ravel J."/>
            <person name="Oekstad O.A."/>
            <person name="Helgason E."/>
            <person name="Cer R.Z."/>
            <person name="Jiang L."/>
            <person name="Shores K.A."/>
            <person name="Fouts D.E."/>
            <person name="Tourasse N.J."/>
            <person name="Angiuoli S.V."/>
            <person name="Kolonay J.F."/>
            <person name="Nelson W.C."/>
            <person name="Kolstoe A.-B."/>
            <person name="Fraser C.M."/>
            <person name="Read T.D."/>
        </authorList>
    </citation>
    <scope>NUCLEOTIDE SEQUENCE [LARGE SCALE GENOMIC DNA]</scope>
    <source>
        <strain>ATCC 10987 / NRS 248</strain>
    </source>
</reference>
<name>MTND_BACC1</name>
<feature type="chain" id="PRO_0000359174" description="Acireductone dioxygenase">
    <location>
        <begin position="1"/>
        <end position="170"/>
    </location>
</feature>
<feature type="binding site" evidence="1">
    <location>
        <position position="99"/>
    </location>
    <ligand>
        <name>Fe(2+)</name>
        <dbReference type="ChEBI" id="CHEBI:29033"/>
    </ligand>
</feature>
<feature type="binding site" evidence="1">
    <location>
        <position position="99"/>
    </location>
    <ligand>
        <name>Ni(2+)</name>
        <dbReference type="ChEBI" id="CHEBI:49786"/>
    </ligand>
</feature>
<feature type="binding site" evidence="1">
    <location>
        <position position="101"/>
    </location>
    <ligand>
        <name>Fe(2+)</name>
        <dbReference type="ChEBI" id="CHEBI:29033"/>
    </ligand>
</feature>
<feature type="binding site" evidence="1">
    <location>
        <position position="101"/>
    </location>
    <ligand>
        <name>Ni(2+)</name>
        <dbReference type="ChEBI" id="CHEBI:49786"/>
    </ligand>
</feature>
<feature type="binding site" evidence="1">
    <location>
        <position position="105"/>
    </location>
    <ligand>
        <name>Fe(2+)</name>
        <dbReference type="ChEBI" id="CHEBI:29033"/>
    </ligand>
</feature>
<feature type="binding site" evidence="1">
    <location>
        <position position="105"/>
    </location>
    <ligand>
        <name>Ni(2+)</name>
        <dbReference type="ChEBI" id="CHEBI:49786"/>
    </ligand>
</feature>
<feature type="binding site" evidence="1">
    <location>
        <position position="144"/>
    </location>
    <ligand>
        <name>Fe(2+)</name>
        <dbReference type="ChEBI" id="CHEBI:29033"/>
    </ligand>
</feature>
<feature type="binding site" evidence="1">
    <location>
        <position position="144"/>
    </location>
    <ligand>
        <name>Ni(2+)</name>
        <dbReference type="ChEBI" id="CHEBI:49786"/>
    </ligand>
</feature>
<feature type="site" description="May play a role in metal incorporation in vivo" evidence="1">
    <location>
        <position position="98"/>
    </location>
</feature>
<feature type="site" description="May play a role in transmitting local conformational changes" evidence="1">
    <location>
        <position position="104"/>
    </location>
</feature>
<feature type="site" description="Important to generate the dianion" evidence="1">
    <location>
        <position position="107"/>
    </location>
</feature>
<accession>Q731Q9</accession>
<protein>
    <recommendedName>
        <fullName evidence="1">Acireductone dioxygenase</fullName>
    </recommendedName>
    <alternativeName>
        <fullName evidence="1">1,2-dihydroxy-3-keto-5-methylthiopentene dioxygenase</fullName>
        <shortName evidence="1">DHK-MTPene dioxygenase</shortName>
    </alternativeName>
    <alternativeName>
        <fullName evidence="1">Acireductone dioxygenase (Fe(2+)-requiring)</fullName>
        <shortName evidence="1">ARD'</shortName>
        <shortName evidence="1">Fe-ARD</shortName>
        <ecNumber evidence="1">1.13.11.54</ecNumber>
    </alternativeName>
    <alternativeName>
        <fullName evidence="1">Acireductone dioxygenase (Ni(2+)-requiring)</fullName>
        <shortName evidence="1">ARD</shortName>
        <shortName evidence="1">Ni-ARD</shortName>
        <ecNumber evidence="1">1.13.11.53</ecNumber>
    </alternativeName>
</protein>
<proteinExistence type="inferred from homology"/>
<organism>
    <name type="scientific">Bacillus cereus (strain ATCC 10987 / NRS 248)</name>
    <dbReference type="NCBI Taxonomy" id="222523"/>
    <lineage>
        <taxon>Bacteria</taxon>
        <taxon>Bacillati</taxon>
        <taxon>Bacillota</taxon>
        <taxon>Bacilli</taxon>
        <taxon>Bacillales</taxon>
        <taxon>Bacillaceae</taxon>
        <taxon>Bacillus</taxon>
        <taxon>Bacillus cereus group</taxon>
    </lineage>
</organism>
<sequence>MAQIRIHEINTRIENEVEVSKFLQEEGVLYEKWNISKLPTHLKENYSLTDENKAEILAVFSKEIADVSSRRGYKAHDVISLSNSTPNLDELLINFQKEHHHTDDEVRFIVSGHGIFAIEGKDGTFFDVELEPGDLISVPENARHYFTLQDDRQVVAIRIFVTTEGWVPIY</sequence>
<dbReference type="EC" id="1.13.11.54" evidence="1"/>
<dbReference type="EC" id="1.13.11.53" evidence="1"/>
<dbReference type="EMBL" id="AE017194">
    <property type="protein sequence ID" value="AAS43008.1"/>
    <property type="molecule type" value="Genomic_DNA"/>
</dbReference>
<dbReference type="SMR" id="Q731Q9"/>
<dbReference type="KEGG" id="bca:BCE_4106"/>
<dbReference type="HOGENOM" id="CLU_125400_0_0_9"/>
<dbReference type="UniPathway" id="UPA00904">
    <property type="reaction ID" value="UER00878"/>
</dbReference>
<dbReference type="Proteomes" id="UP000002527">
    <property type="component" value="Chromosome"/>
</dbReference>
<dbReference type="GO" id="GO:0010308">
    <property type="term" value="F:acireductone dioxygenase (Ni2+-requiring) activity"/>
    <property type="evidence" value="ECO:0007669"/>
    <property type="project" value="UniProtKB-UniRule"/>
</dbReference>
<dbReference type="GO" id="GO:0010309">
    <property type="term" value="F:acireductone dioxygenase [iron(II)-requiring] activity"/>
    <property type="evidence" value="ECO:0007669"/>
    <property type="project" value="UniProtKB-UniRule"/>
</dbReference>
<dbReference type="GO" id="GO:0005506">
    <property type="term" value="F:iron ion binding"/>
    <property type="evidence" value="ECO:0007669"/>
    <property type="project" value="UniProtKB-UniRule"/>
</dbReference>
<dbReference type="GO" id="GO:0016151">
    <property type="term" value="F:nickel cation binding"/>
    <property type="evidence" value="ECO:0007669"/>
    <property type="project" value="UniProtKB-UniRule"/>
</dbReference>
<dbReference type="GO" id="GO:0019509">
    <property type="term" value="P:L-methionine salvage from methylthioadenosine"/>
    <property type="evidence" value="ECO:0007669"/>
    <property type="project" value="UniProtKB-UniRule"/>
</dbReference>
<dbReference type="GO" id="GO:0019284">
    <property type="term" value="P:L-methionine salvage from S-adenosylmethionine"/>
    <property type="evidence" value="ECO:0007669"/>
    <property type="project" value="InterPro"/>
</dbReference>
<dbReference type="CDD" id="cd02232">
    <property type="entry name" value="cupin_ARD"/>
    <property type="match status" value="1"/>
</dbReference>
<dbReference type="FunFam" id="2.60.120.10:FF:000056">
    <property type="entry name" value="Acireductone dioxygenase"/>
    <property type="match status" value="1"/>
</dbReference>
<dbReference type="Gene3D" id="2.60.120.10">
    <property type="entry name" value="Jelly Rolls"/>
    <property type="match status" value="1"/>
</dbReference>
<dbReference type="HAMAP" id="MF_01682">
    <property type="entry name" value="Salvage_MtnD"/>
    <property type="match status" value="1"/>
</dbReference>
<dbReference type="InterPro" id="IPR004313">
    <property type="entry name" value="ARD"/>
</dbReference>
<dbReference type="InterPro" id="IPR023956">
    <property type="entry name" value="ARD_bac"/>
</dbReference>
<dbReference type="InterPro" id="IPR014710">
    <property type="entry name" value="RmlC-like_jellyroll"/>
</dbReference>
<dbReference type="InterPro" id="IPR011051">
    <property type="entry name" value="RmlC_Cupin_sf"/>
</dbReference>
<dbReference type="PANTHER" id="PTHR23418">
    <property type="entry name" value="ACIREDUCTONE DIOXYGENASE"/>
    <property type="match status" value="1"/>
</dbReference>
<dbReference type="PANTHER" id="PTHR23418:SF0">
    <property type="entry name" value="ACIREDUCTONE DIOXYGENASE"/>
    <property type="match status" value="1"/>
</dbReference>
<dbReference type="Pfam" id="PF03079">
    <property type="entry name" value="ARD"/>
    <property type="match status" value="1"/>
</dbReference>
<dbReference type="SUPFAM" id="SSF51182">
    <property type="entry name" value="RmlC-like cupins"/>
    <property type="match status" value="1"/>
</dbReference>